<dbReference type="EMBL" id="CP000539">
    <property type="protein sequence ID" value="ABM40654.1"/>
    <property type="molecule type" value="Genomic_DNA"/>
</dbReference>
<dbReference type="SMR" id="A1W329"/>
<dbReference type="STRING" id="232721.Ajs_0402"/>
<dbReference type="KEGG" id="ajs:Ajs_0402"/>
<dbReference type="eggNOG" id="COG0257">
    <property type="taxonomic scope" value="Bacteria"/>
</dbReference>
<dbReference type="HOGENOM" id="CLU_135723_6_2_4"/>
<dbReference type="Proteomes" id="UP000000645">
    <property type="component" value="Chromosome"/>
</dbReference>
<dbReference type="GO" id="GO:0005737">
    <property type="term" value="C:cytoplasm"/>
    <property type="evidence" value="ECO:0007669"/>
    <property type="project" value="UniProtKB-ARBA"/>
</dbReference>
<dbReference type="GO" id="GO:1990904">
    <property type="term" value="C:ribonucleoprotein complex"/>
    <property type="evidence" value="ECO:0007669"/>
    <property type="project" value="UniProtKB-KW"/>
</dbReference>
<dbReference type="GO" id="GO:0005840">
    <property type="term" value="C:ribosome"/>
    <property type="evidence" value="ECO:0007669"/>
    <property type="project" value="UniProtKB-KW"/>
</dbReference>
<dbReference type="GO" id="GO:0003735">
    <property type="term" value="F:structural constituent of ribosome"/>
    <property type="evidence" value="ECO:0007669"/>
    <property type="project" value="InterPro"/>
</dbReference>
<dbReference type="GO" id="GO:0006412">
    <property type="term" value="P:translation"/>
    <property type="evidence" value="ECO:0007669"/>
    <property type="project" value="UniProtKB-UniRule"/>
</dbReference>
<dbReference type="HAMAP" id="MF_00251">
    <property type="entry name" value="Ribosomal_bL36"/>
    <property type="match status" value="1"/>
</dbReference>
<dbReference type="InterPro" id="IPR000473">
    <property type="entry name" value="Ribosomal_bL36"/>
</dbReference>
<dbReference type="InterPro" id="IPR035977">
    <property type="entry name" value="Ribosomal_bL36_sp"/>
</dbReference>
<dbReference type="NCBIfam" id="TIGR01022">
    <property type="entry name" value="rpmJ_bact"/>
    <property type="match status" value="1"/>
</dbReference>
<dbReference type="PANTHER" id="PTHR42888">
    <property type="entry name" value="50S RIBOSOMAL PROTEIN L36, CHLOROPLASTIC"/>
    <property type="match status" value="1"/>
</dbReference>
<dbReference type="PANTHER" id="PTHR42888:SF1">
    <property type="entry name" value="LARGE RIBOSOMAL SUBUNIT PROTEIN BL36C"/>
    <property type="match status" value="1"/>
</dbReference>
<dbReference type="Pfam" id="PF00444">
    <property type="entry name" value="Ribosomal_L36"/>
    <property type="match status" value="1"/>
</dbReference>
<dbReference type="SUPFAM" id="SSF57840">
    <property type="entry name" value="Ribosomal protein L36"/>
    <property type="match status" value="1"/>
</dbReference>
<dbReference type="PROSITE" id="PS00828">
    <property type="entry name" value="RIBOSOMAL_L36"/>
    <property type="match status" value="1"/>
</dbReference>
<proteinExistence type="inferred from homology"/>
<evidence type="ECO:0000255" key="1">
    <source>
        <dbReference type="HAMAP-Rule" id="MF_00251"/>
    </source>
</evidence>
<evidence type="ECO:0000305" key="2"/>
<sequence>MRVSASVKKICRNCKIIRRKGVVRVICTDQRHKQRQG</sequence>
<gene>
    <name evidence="1" type="primary">rpmJ</name>
    <name type="ordered locus">Ajs_0402</name>
</gene>
<organism>
    <name type="scientific">Acidovorax sp. (strain JS42)</name>
    <dbReference type="NCBI Taxonomy" id="232721"/>
    <lineage>
        <taxon>Bacteria</taxon>
        <taxon>Pseudomonadati</taxon>
        <taxon>Pseudomonadota</taxon>
        <taxon>Betaproteobacteria</taxon>
        <taxon>Burkholderiales</taxon>
        <taxon>Comamonadaceae</taxon>
        <taxon>Acidovorax</taxon>
    </lineage>
</organism>
<reference key="1">
    <citation type="submission" date="2006-12" db="EMBL/GenBank/DDBJ databases">
        <title>Complete sequence of chromosome 1 of Acidovorax sp. JS42.</title>
        <authorList>
            <person name="Copeland A."/>
            <person name="Lucas S."/>
            <person name="Lapidus A."/>
            <person name="Barry K."/>
            <person name="Detter J.C."/>
            <person name="Glavina del Rio T."/>
            <person name="Dalin E."/>
            <person name="Tice H."/>
            <person name="Pitluck S."/>
            <person name="Chertkov O."/>
            <person name="Brettin T."/>
            <person name="Bruce D."/>
            <person name="Han C."/>
            <person name="Tapia R."/>
            <person name="Gilna P."/>
            <person name="Schmutz J."/>
            <person name="Larimer F."/>
            <person name="Land M."/>
            <person name="Hauser L."/>
            <person name="Kyrpides N."/>
            <person name="Kim E."/>
            <person name="Stahl D."/>
            <person name="Richardson P."/>
        </authorList>
    </citation>
    <scope>NUCLEOTIDE SEQUENCE [LARGE SCALE GENOMIC DNA]</scope>
    <source>
        <strain>JS42</strain>
    </source>
</reference>
<accession>A1W329</accession>
<protein>
    <recommendedName>
        <fullName evidence="1">Large ribosomal subunit protein bL36</fullName>
    </recommendedName>
    <alternativeName>
        <fullName evidence="2">50S ribosomal protein L36</fullName>
    </alternativeName>
</protein>
<keyword id="KW-0687">Ribonucleoprotein</keyword>
<keyword id="KW-0689">Ribosomal protein</keyword>
<comment type="similarity">
    <text evidence="1">Belongs to the bacterial ribosomal protein bL36 family.</text>
</comment>
<feature type="chain" id="PRO_0000302146" description="Large ribosomal subunit protein bL36">
    <location>
        <begin position="1"/>
        <end position="37"/>
    </location>
</feature>
<name>RL36_ACISJ</name>